<keyword id="KW-1003">Cell membrane</keyword>
<keyword id="KW-0472">Membrane</keyword>
<keyword id="KW-1185">Reference proteome</keyword>
<keyword id="KW-0812">Transmembrane</keyword>
<keyword id="KW-1133">Transmembrane helix</keyword>
<protein>
    <recommendedName>
        <fullName>CASP-like protein 4U1</fullName>
        <shortName>ZmCASPL4U1</shortName>
    </recommendedName>
    <alternativeName>
        <fullName>Vegetative cell wall protein gp1</fullName>
    </alternativeName>
</protein>
<feature type="chain" id="PRO_0000391581" description="CASP-like protein 4U1">
    <location>
        <begin position="1"/>
        <end position="369"/>
    </location>
</feature>
<feature type="topological domain" description="Cytoplasmic" evidence="2">
    <location>
        <begin position="1"/>
        <end position="222"/>
    </location>
</feature>
<feature type="transmembrane region" description="Helical" evidence="2">
    <location>
        <begin position="223"/>
        <end position="243"/>
    </location>
</feature>
<feature type="topological domain" description="Extracellular" evidence="2">
    <location>
        <begin position="244"/>
        <end position="262"/>
    </location>
</feature>
<feature type="transmembrane region" description="Helical" evidence="2">
    <location>
        <begin position="263"/>
        <end position="283"/>
    </location>
</feature>
<feature type="topological domain" description="Cytoplasmic" evidence="2">
    <location>
        <begin position="284"/>
        <end position="300"/>
    </location>
</feature>
<feature type="transmembrane region" description="Helical" evidence="2">
    <location>
        <begin position="301"/>
        <end position="321"/>
    </location>
</feature>
<feature type="topological domain" description="Extracellular" evidence="2">
    <location>
        <begin position="322"/>
        <end position="339"/>
    </location>
</feature>
<feature type="transmembrane region" description="Helical" evidence="2">
    <location>
        <begin position="340"/>
        <end position="360"/>
    </location>
</feature>
<feature type="topological domain" description="Cytoplasmic" evidence="2">
    <location>
        <begin position="361"/>
        <end position="369"/>
    </location>
</feature>
<feature type="region of interest" description="Disordered" evidence="3">
    <location>
        <begin position="1"/>
        <end position="162"/>
    </location>
</feature>
<feature type="compositionally biased region" description="Pro residues" evidence="3">
    <location>
        <begin position="7"/>
        <end position="23"/>
    </location>
</feature>
<feature type="compositionally biased region" description="Basic and acidic residues" evidence="3">
    <location>
        <begin position="36"/>
        <end position="51"/>
    </location>
</feature>
<feature type="compositionally biased region" description="Low complexity" evidence="3">
    <location>
        <begin position="87"/>
        <end position="96"/>
    </location>
</feature>
<feature type="compositionally biased region" description="Low complexity" evidence="3">
    <location>
        <begin position="114"/>
        <end position="127"/>
    </location>
</feature>
<comment type="subunit">
    <text evidence="1">Homodimer and heterodimers.</text>
</comment>
<comment type="subcellular location">
    <subcellularLocation>
        <location evidence="1">Cell membrane</location>
        <topology evidence="1">Multi-pass membrane protein</topology>
    </subcellularLocation>
</comment>
<comment type="similarity">
    <text evidence="4">Belongs to the Casparian strip membrane proteins (CASP) family.</text>
</comment>
<proteinExistence type="evidence at transcript level"/>
<reference key="1">
    <citation type="journal article" date="2009" name="Plant Mol. Biol.">
        <title>Insights into corn genes derived from large-scale cDNA sequencing.</title>
        <authorList>
            <person name="Alexandrov N.N."/>
            <person name="Brover V.V."/>
            <person name="Freidin S."/>
            <person name="Troukhan M.E."/>
            <person name="Tatarinova T.V."/>
            <person name="Zhang H."/>
            <person name="Swaller T.J."/>
            <person name="Lu Y.-P."/>
            <person name="Bouck J."/>
            <person name="Flavell R.B."/>
            <person name="Feldmann K.A."/>
        </authorList>
    </citation>
    <scope>NUCLEOTIDE SEQUENCE [LARGE SCALE MRNA]</scope>
</reference>
<reference key="2">
    <citation type="journal article" date="2014" name="Plant Physiol.">
        <title>Functional and evolutionary analysis of the CASPARIAN STRIP MEMBRANE DOMAIN PROTEIN family.</title>
        <authorList>
            <person name="Roppolo D."/>
            <person name="Boeckmann B."/>
            <person name="Pfister A."/>
            <person name="Boutet E."/>
            <person name="Rubio M.C."/>
            <person name="Denervaud-Tendon V."/>
            <person name="Vermeer J.E."/>
            <person name="Gheyselinck J."/>
            <person name="Xenarios I."/>
            <person name="Geldner N."/>
        </authorList>
    </citation>
    <scope>GENE FAMILY</scope>
    <scope>NOMENCLATURE</scope>
</reference>
<evidence type="ECO:0000250" key="1"/>
<evidence type="ECO:0000255" key="2"/>
<evidence type="ECO:0000256" key="3">
    <source>
        <dbReference type="SAM" id="MobiDB-lite"/>
    </source>
</evidence>
<evidence type="ECO:0000305" key="4"/>
<accession>B6UBY6</accession>
<organism>
    <name type="scientific">Zea mays</name>
    <name type="common">Maize</name>
    <dbReference type="NCBI Taxonomy" id="4577"/>
    <lineage>
        <taxon>Eukaryota</taxon>
        <taxon>Viridiplantae</taxon>
        <taxon>Streptophyta</taxon>
        <taxon>Embryophyta</taxon>
        <taxon>Tracheophyta</taxon>
        <taxon>Spermatophyta</taxon>
        <taxon>Magnoliopsida</taxon>
        <taxon>Liliopsida</taxon>
        <taxon>Poales</taxon>
        <taxon>Poaceae</taxon>
        <taxon>PACMAD clade</taxon>
        <taxon>Panicoideae</taxon>
        <taxon>Andropogonodae</taxon>
        <taxon>Andropogoneae</taxon>
        <taxon>Tripsacinae</taxon>
        <taxon>Zea</taxon>
    </lineage>
</organism>
<dbReference type="EMBL" id="EU974751">
    <property type="protein sequence ID" value="ACG46869.1"/>
    <property type="molecule type" value="mRNA"/>
</dbReference>
<dbReference type="RefSeq" id="NP_001152294.2">
    <property type="nucleotide sequence ID" value="NM_001158822.2"/>
</dbReference>
<dbReference type="PaxDb" id="4577-GRMZM2G094356_P01"/>
<dbReference type="GeneID" id="100285933"/>
<dbReference type="KEGG" id="zma:100285933"/>
<dbReference type="eggNOG" id="ENOG502QW75">
    <property type="taxonomic scope" value="Eukaryota"/>
</dbReference>
<dbReference type="InParanoid" id="B6UBY6"/>
<dbReference type="Proteomes" id="UP000007305">
    <property type="component" value="Unplaced"/>
</dbReference>
<dbReference type="ExpressionAtlas" id="B6UBY6">
    <property type="expression patterns" value="baseline"/>
</dbReference>
<dbReference type="GO" id="GO:0005886">
    <property type="term" value="C:plasma membrane"/>
    <property type="evidence" value="ECO:0007669"/>
    <property type="project" value="UniProtKB-SubCell"/>
</dbReference>
<dbReference type="InterPro" id="IPR006702">
    <property type="entry name" value="CASP_dom"/>
</dbReference>
<dbReference type="PANTHER" id="PTHR33573">
    <property type="entry name" value="CASP-LIKE PROTEIN 4A4"/>
    <property type="match status" value="1"/>
</dbReference>
<dbReference type="PANTHER" id="PTHR33573:SF35">
    <property type="entry name" value="CASP-LIKE PROTEIN 4U1"/>
    <property type="match status" value="1"/>
</dbReference>
<dbReference type="Pfam" id="PF04535">
    <property type="entry name" value="CASP_dom"/>
    <property type="match status" value="1"/>
</dbReference>
<sequence length="369" mass="38902">MASTPRTPAPERSPPPVPTPPPPLEDEPPPYLADGSPREEASFSSDGREGAPPKNPQLSPTHHAAPRLVPPPSSPARQDGQEQEGSANKAAAATAEPAREPLRQMATGLARPLSSQTSPATTNSPTPSASPTPSSPAPVANNSKRSGQSTPKRAETKLPLSSPAVAVHFDPVEEAVTSPLRLGKARLDQQQQQQHAAGAAESGASVVPGVAAAVAAVAERRELLLALRLATAVLSLAAFSVIASARTSGWAGDYYARHLQYRYAVAVNVIVFAYSVAQSLGKIRHLVSPRFTFRTMSSYYCSLFLDQVLAYLLMSASSAAASRNDLWVSRFGTDAFVRKITGALWLSFVAFLVLALNAVISXANLFSMV</sequence>
<name>CSPLG_MAIZE</name>